<name>PYRF_SHIF8</name>
<evidence type="ECO:0000255" key="1">
    <source>
        <dbReference type="HAMAP-Rule" id="MF_01200"/>
    </source>
</evidence>
<comment type="function">
    <text evidence="1">Catalyzes the decarboxylation of orotidine 5'-monophosphate (OMP) to uridine 5'-monophosphate (UMP).</text>
</comment>
<comment type="catalytic activity">
    <reaction evidence="1">
        <text>orotidine 5'-phosphate + H(+) = UMP + CO2</text>
        <dbReference type="Rhea" id="RHEA:11596"/>
        <dbReference type="ChEBI" id="CHEBI:15378"/>
        <dbReference type="ChEBI" id="CHEBI:16526"/>
        <dbReference type="ChEBI" id="CHEBI:57538"/>
        <dbReference type="ChEBI" id="CHEBI:57865"/>
        <dbReference type="EC" id="4.1.1.23"/>
    </reaction>
</comment>
<comment type="pathway">
    <text evidence="1">Pyrimidine metabolism; UMP biosynthesis via de novo pathway; UMP from orotate: step 2/2.</text>
</comment>
<comment type="subunit">
    <text evidence="1">Homodimer.</text>
</comment>
<comment type="similarity">
    <text evidence="1">Belongs to the OMP decarboxylase family. Type 1 subfamily.</text>
</comment>
<gene>
    <name evidence="1" type="primary">pyrF</name>
    <name type="ordered locus">SFV_1294</name>
</gene>
<reference key="1">
    <citation type="journal article" date="2006" name="BMC Genomics">
        <title>Complete genome sequence of Shigella flexneri 5b and comparison with Shigella flexneri 2a.</title>
        <authorList>
            <person name="Nie H."/>
            <person name="Yang F."/>
            <person name="Zhang X."/>
            <person name="Yang J."/>
            <person name="Chen L."/>
            <person name="Wang J."/>
            <person name="Xiong Z."/>
            <person name="Peng J."/>
            <person name="Sun L."/>
            <person name="Dong J."/>
            <person name="Xue Y."/>
            <person name="Xu X."/>
            <person name="Chen S."/>
            <person name="Yao Z."/>
            <person name="Shen Y."/>
            <person name="Jin Q."/>
        </authorList>
    </citation>
    <scope>NUCLEOTIDE SEQUENCE [LARGE SCALE GENOMIC DNA]</scope>
    <source>
        <strain>8401</strain>
    </source>
</reference>
<accession>Q0T5B6</accession>
<keyword id="KW-0210">Decarboxylase</keyword>
<keyword id="KW-0456">Lyase</keyword>
<keyword id="KW-0665">Pyrimidine biosynthesis</keyword>
<dbReference type="EC" id="4.1.1.23" evidence="1"/>
<dbReference type="EMBL" id="CP000266">
    <property type="protein sequence ID" value="ABF03499.1"/>
    <property type="molecule type" value="Genomic_DNA"/>
</dbReference>
<dbReference type="RefSeq" id="WP_000176259.1">
    <property type="nucleotide sequence ID" value="NC_008258.1"/>
</dbReference>
<dbReference type="SMR" id="Q0T5B6"/>
<dbReference type="KEGG" id="sfv:SFV_1294"/>
<dbReference type="HOGENOM" id="CLU_067069_0_0_6"/>
<dbReference type="UniPathway" id="UPA00070">
    <property type="reaction ID" value="UER00120"/>
</dbReference>
<dbReference type="Proteomes" id="UP000000659">
    <property type="component" value="Chromosome"/>
</dbReference>
<dbReference type="GO" id="GO:0005829">
    <property type="term" value="C:cytosol"/>
    <property type="evidence" value="ECO:0007669"/>
    <property type="project" value="TreeGrafter"/>
</dbReference>
<dbReference type="GO" id="GO:0004590">
    <property type="term" value="F:orotidine-5'-phosphate decarboxylase activity"/>
    <property type="evidence" value="ECO:0007669"/>
    <property type="project" value="UniProtKB-UniRule"/>
</dbReference>
<dbReference type="GO" id="GO:0006207">
    <property type="term" value="P:'de novo' pyrimidine nucleobase biosynthetic process"/>
    <property type="evidence" value="ECO:0007669"/>
    <property type="project" value="InterPro"/>
</dbReference>
<dbReference type="GO" id="GO:0044205">
    <property type="term" value="P:'de novo' UMP biosynthetic process"/>
    <property type="evidence" value="ECO:0007669"/>
    <property type="project" value="UniProtKB-UniRule"/>
</dbReference>
<dbReference type="CDD" id="cd04725">
    <property type="entry name" value="OMP_decarboxylase_like"/>
    <property type="match status" value="1"/>
</dbReference>
<dbReference type="FunFam" id="3.20.20.70:FF:000015">
    <property type="entry name" value="Orotidine 5'-phosphate decarboxylase"/>
    <property type="match status" value="1"/>
</dbReference>
<dbReference type="Gene3D" id="3.20.20.70">
    <property type="entry name" value="Aldolase class I"/>
    <property type="match status" value="1"/>
</dbReference>
<dbReference type="HAMAP" id="MF_01200_B">
    <property type="entry name" value="OMPdecase_type1_B"/>
    <property type="match status" value="1"/>
</dbReference>
<dbReference type="InterPro" id="IPR013785">
    <property type="entry name" value="Aldolase_TIM"/>
</dbReference>
<dbReference type="InterPro" id="IPR014732">
    <property type="entry name" value="OMPdecase"/>
</dbReference>
<dbReference type="InterPro" id="IPR018089">
    <property type="entry name" value="OMPdecase_AS"/>
</dbReference>
<dbReference type="InterPro" id="IPR047596">
    <property type="entry name" value="OMPdecase_bac"/>
</dbReference>
<dbReference type="InterPro" id="IPR001754">
    <property type="entry name" value="OMPdeCOase_dom"/>
</dbReference>
<dbReference type="InterPro" id="IPR011060">
    <property type="entry name" value="RibuloseP-bd_barrel"/>
</dbReference>
<dbReference type="NCBIfam" id="NF001273">
    <property type="entry name" value="PRK00230.1"/>
    <property type="match status" value="1"/>
</dbReference>
<dbReference type="NCBIfam" id="TIGR01740">
    <property type="entry name" value="pyrF"/>
    <property type="match status" value="1"/>
</dbReference>
<dbReference type="PANTHER" id="PTHR32119">
    <property type="entry name" value="OROTIDINE 5'-PHOSPHATE DECARBOXYLASE"/>
    <property type="match status" value="1"/>
</dbReference>
<dbReference type="PANTHER" id="PTHR32119:SF2">
    <property type="entry name" value="OROTIDINE 5'-PHOSPHATE DECARBOXYLASE"/>
    <property type="match status" value="1"/>
</dbReference>
<dbReference type="Pfam" id="PF00215">
    <property type="entry name" value="OMPdecase"/>
    <property type="match status" value="1"/>
</dbReference>
<dbReference type="SMART" id="SM00934">
    <property type="entry name" value="OMPdecase"/>
    <property type="match status" value="1"/>
</dbReference>
<dbReference type="SUPFAM" id="SSF51366">
    <property type="entry name" value="Ribulose-phoshate binding barrel"/>
    <property type="match status" value="1"/>
</dbReference>
<dbReference type="PROSITE" id="PS00156">
    <property type="entry name" value="OMPDECASE"/>
    <property type="match status" value="1"/>
</dbReference>
<organism>
    <name type="scientific">Shigella flexneri serotype 5b (strain 8401)</name>
    <dbReference type="NCBI Taxonomy" id="373384"/>
    <lineage>
        <taxon>Bacteria</taxon>
        <taxon>Pseudomonadati</taxon>
        <taxon>Pseudomonadota</taxon>
        <taxon>Gammaproteobacteria</taxon>
        <taxon>Enterobacterales</taxon>
        <taxon>Enterobacteriaceae</taxon>
        <taxon>Shigella</taxon>
    </lineage>
</organism>
<proteinExistence type="inferred from homology"/>
<sequence>MTLTASSSSRAVTNSPVVVALDYHNCDDALSFVDKIDPRDCRLKVGKEMFTLFGPQFVRELQQRGFDIFLDLKFHDIPNTAAHAVAAAADLGVWMVNVHASGGARMMTAAREALVPFGKDAPLLIAVTVLTSMEASDLADLGVTLSPADYAERLAALTQKCGLDGVVCSAQEAVRFKQVFGQEFKLVTPGIRPQGSEAGDQRRIMTPEQALAAGVDYMVIGRPVTQSVDPAQTLKAINASLQRSA</sequence>
<feature type="chain" id="PRO_1000065940" description="Orotidine 5'-phosphate decarboxylase">
    <location>
        <begin position="1"/>
        <end position="245"/>
    </location>
</feature>
<feature type="active site" description="Proton donor" evidence="1">
    <location>
        <position position="73"/>
    </location>
</feature>
<feature type="binding site" evidence="1">
    <location>
        <position position="22"/>
    </location>
    <ligand>
        <name>substrate</name>
    </ligand>
</feature>
<feature type="binding site" evidence="1">
    <location>
        <position position="44"/>
    </location>
    <ligand>
        <name>substrate</name>
    </ligand>
</feature>
<feature type="binding site" evidence="1">
    <location>
        <begin position="71"/>
        <end position="80"/>
    </location>
    <ligand>
        <name>substrate</name>
    </ligand>
</feature>
<feature type="binding site" evidence="1">
    <location>
        <position position="131"/>
    </location>
    <ligand>
        <name>substrate</name>
    </ligand>
</feature>
<feature type="binding site" evidence="1">
    <location>
        <position position="192"/>
    </location>
    <ligand>
        <name>substrate</name>
    </ligand>
</feature>
<feature type="binding site" evidence="1">
    <location>
        <position position="201"/>
    </location>
    <ligand>
        <name>substrate</name>
    </ligand>
</feature>
<feature type="binding site" evidence="1">
    <location>
        <position position="221"/>
    </location>
    <ligand>
        <name>substrate</name>
    </ligand>
</feature>
<feature type="binding site" evidence="1">
    <location>
        <position position="222"/>
    </location>
    <ligand>
        <name>substrate</name>
    </ligand>
</feature>
<protein>
    <recommendedName>
        <fullName evidence="1">Orotidine 5'-phosphate decarboxylase</fullName>
        <ecNumber evidence="1">4.1.1.23</ecNumber>
    </recommendedName>
    <alternativeName>
        <fullName evidence="1">OMP decarboxylase</fullName>
        <shortName evidence="1">OMPDCase</shortName>
        <shortName evidence="1">OMPdecase</shortName>
    </alternativeName>
</protein>